<evidence type="ECO:0000250" key="1">
    <source>
        <dbReference type="UniProtKB" id="P28224"/>
    </source>
</evidence>
<evidence type="ECO:0000250" key="2">
    <source>
        <dbReference type="UniProtKB" id="Q9I574"/>
    </source>
</evidence>
<evidence type="ECO:0000255" key="3">
    <source>
        <dbReference type="PROSITE-ProRule" id="PRU00303"/>
    </source>
</evidence>
<evidence type="ECO:0000305" key="4"/>
<evidence type="ECO:0000312" key="5">
    <source>
        <dbReference type="EMBL" id="CAL12211.1"/>
    </source>
</evidence>
<organism>
    <name type="scientific">Yersinia enterocolitica serotype O:8 / biotype 1B (strain NCTC 13174 / 8081)</name>
    <dbReference type="NCBI Taxonomy" id="393305"/>
    <lineage>
        <taxon>Bacteria</taxon>
        <taxon>Pseudomonadati</taxon>
        <taxon>Pseudomonadota</taxon>
        <taxon>Gammaproteobacteria</taxon>
        <taxon>Enterobacterales</taxon>
        <taxon>Yersiniaceae</taxon>
        <taxon>Yersinia</taxon>
    </lineage>
</organism>
<gene>
    <name type="primary">mliC</name>
    <name evidence="5" type="ordered locus">YE2141</name>
</gene>
<accession>P28837</accession>
<accession>A1JNW5</accession>
<keyword id="KW-0998">Cell outer membrane</keyword>
<keyword id="KW-1015">Disulfide bond</keyword>
<keyword id="KW-0449">Lipoprotein</keyword>
<keyword id="KW-0472">Membrane</keyword>
<keyword id="KW-0564">Palmitate</keyword>
<keyword id="KW-0732">Signal</keyword>
<sequence length="117" mass="12901">MKHLFGTTAVLGTAAVLMLTGCSLVQPKNETLHYQCGGTKLTVMQDNKQDKVSLVLDGKQLTLPQVRAASGAKYSDNHYTFWSKGNTAFVERDEKVIINDCRLLTTPNDSILQGEDR</sequence>
<feature type="signal peptide" evidence="3">
    <location>
        <begin position="1"/>
        <end position="21"/>
    </location>
</feature>
<feature type="chain" id="PRO_0000066375" description="Membrane-bound lysozyme inhibitor of C-type lysozyme">
    <location>
        <begin position="22"/>
        <end position="117"/>
    </location>
</feature>
<feature type="site" description="Directly involved in lysozyme active site inhibition" evidence="2">
    <location>
        <position position="70"/>
    </location>
</feature>
<feature type="site" description="Directly involved in lysozyme active site inhibition" evidence="2">
    <location>
        <position position="84"/>
    </location>
</feature>
<feature type="lipid moiety-binding region" description="N-palmitoyl cysteine" evidence="3">
    <location>
        <position position="22"/>
    </location>
</feature>
<feature type="lipid moiety-binding region" description="S-diacylglycerol cysteine" evidence="3">
    <location>
        <position position="22"/>
    </location>
</feature>
<feature type="disulfide bond" evidence="1">
    <location>
        <begin position="36"/>
        <end position="101"/>
    </location>
</feature>
<name>MLIC_YERE8</name>
<reference key="1">
    <citation type="journal article" date="2006" name="PLoS Genet.">
        <title>The complete genome sequence and comparative genome analysis of the high pathogenicity Yersinia enterocolitica strain 8081.</title>
        <authorList>
            <person name="Thomson N.R."/>
            <person name="Howard S."/>
            <person name="Wren B.W."/>
            <person name="Holden M.T.G."/>
            <person name="Crossman L."/>
            <person name="Challis G.L."/>
            <person name="Churcher C."/>
            <person name="Mungall K."/>
            <person name="Brooks K."/>
            <person name="Chillingworth T."/>
            <person name="Feltwell T."/>
            <person name="Abdellah Z."/>
            <person name="Hauser H."/>
            <person name="Jagels K."/>
            <person name="Maddison M."/>
            <person name="Moule S."/>
            <person name="Sanders M."/>
            <person name="Whitehead S."/>
            <person name="Quail M.A."/>
            <person name="Dougan G."/>
            <person name="Parkhill J."/>
            <person name="Prentice M.B."/>
        </authorList>
    </citation>
    <scope>NUCLEOTIDE SEQUENCE [LARGE SCALE GENOMIC DNA]</scope>
    <source>
        <strain>NCTC 13174 / 8081</strain>
    </source>
</reference>
<reference key="2">
    <citation type="submission" date="1991-09" db="EMBL/GenBank/DDBJ databases">
        <authorList>
            <person name="Baeumler A.J."/>
        </authorList>
    </citation>
    <scope>NUCLEOTIDE SEQUENCE [GENOMIC DNA] OF 1-101</scope>
    <source>
        <strain>ATCC 51872 / WA-C / Serotype O:8</strain>
    </source>
</reference>
<dbReference type="EMBL" id="AM286415">
    <property type="protein sequence ID" value="CAL12211.1"/>
    <property type="molecule type" value="Genomic_DNA"/>
</dbReference>
<dbReference type="EMBL" id="X60449">
    <property type="protein sequence ID" value="CAA42979.1"/>
    <property type="molecule type" value="Genomic_DNA"/>
</dbReference>
<dbReference type="RefSeq" id="WP_011816373.1">
    <property type="nucleotide sequence ID" value="NC_008800.1"/>
</dbReference>
<dbReference type="RefSeq" id="YP_001006381.1">
    <property type="nucleotide sequence ID" value="NC_008800.1"/>
</dbReference>
<dbReference type="SMR" id="P28837"/>
<dbReference type="KEGG" id="yen:YE2141"/>
<dbReference type="PATRIC" id="fig|393305.7.peg.2304"/>
<dbReference type="eggNOG" id="COG3895">
    <property type="taxonomic scope" value="Bacteria"/>
</dbReference>
<dbReference type="HOGENOM" id="CLU_166586_0_0_6"/>
<dbReference type="OrthoDB" id="5588236at2"/>
<dbReference type="Proteomes" id="UP000000642">
    <property type="component" value="Chromosome"/>
</dbReference>
<dbReference type="GO" id="GO:0009279">
    <property type="term" value="C:cell outer membrane"/>
    <property type="evidence" value="ECO:0007669"/>
    <property type="project" value="UniProtKB-SubCell"/>
</dbReference>
<dbReference type="Gene3D" id="2.40.128.200">
    <property type="match status" value="1"/>
</dbReference>
<dbReference type="InterPro" id="IPR018660">
    <property type="entry name" value="MliC"/>
</dbReference>
<dbReference type="InterPro" id="IPR036328">
    <property type="entry name" value="MliC_sf"/>
</dbReference>
<dbReference type="Pfam" id="PF09864">
    <property type="entry name" value="MliC"/>
    <property type="match status" value="1"/>
</dbReference>
<dbReference type="SUPFAM" id="SSF141488">
    <property type="entry name" value="YdhA-like"/>
    <property type="match status" value="1"/>
</dbReference>
<dbReference type="PROSITE" id="PS51257">
    <property type="entry name" value="PROKAR_LIPOPROTEIN"/>
    <property type="match status" value="1"/>
</dbReference>
<comment type="function">
    <text evidence="1">Specifically inhibits C-type lysozymes.</text>
</comment>
<comment type="subunit">
    <text evidence="1">Monomer.</text>
</comment>
<comment type="subcellular location">
    <subcellularLocation>
        <location evidence="1">Cell outer membrane</location>
        <topology evidence="3">Lipid-anchor</topology>
    </subcellularLocation>
    <text evidence="1">Anchored to the periplasmic side.</text>
</comment>
<comment type="similarity">
    <text evidence="4">Belongs to the MliC family. Type 1 subfamily.</text>
</comment>
<protein>
    <recommendedName>
        <fullName evidence="1">Membrane-bound lysozyme inhibitor of C-type lysozyme</fullName>
    </recommendedName>
</protein>
<proteinExistence type="inferred from homology"/>